<name>CDPF1_XENLA</name>
<dbReference type="EMBL" id="BC129747">
    <property type="protein sequence ID" value="AAI29748.1"/>
    <property type="molecule type" value="mRNA"/>
</dbReference>
<dbReference type="RefSeq" id="NP_001091204.1">
    <property type="nucleotide sequence ID" value="NM_001097735.1"/>
</dbReference>
<dbReference type="SMR" id="A1L2W7"/>
<dbReference type="DNASU" id="100036973"/>
<dbReference type="GeneID" id="100036973"/>
<dbReference type="KEGG" id="xla:100036973"/>
<dbReference type="AGR" id="Xenbase:XB-GENE-5904322"/>
<dbReference type="CTD" id="100036973"/>
<dbReference type="Xenbase" id="XB-GENE-5904322">
    <property type="gene designation" value="cdpf1.L"/>
</dbReference>
<dbReference type="OMA" id="CDMHELV"/>
<dbReference type="OrthoDB" id="191995at2759"/>
<dbReference type="Proteomes" id="UP000186698">
    <property type="component" value="Chromosome 3L"/>
</dbReference>
<dbReference type="Bgee" id="100036973">
    <property type="expression patterns" value="Expressed in egg cell and 19 other cell types or tissues"/>
</dbReference>
<dbReference type="InterPro" id="IPR042426">
    <property type="entry name" value="CDPF1"/>
</dbReference>
<dbReference type="InterPro" id="IPR018785">
    <property type="entry name" value="CDPF1_dom"/>
</dbReference>
<dbReference type="PANTHER" id="PTHR31849:SF1">
    <property type="entry name" value="CYSTEINE-RICH DPF MOTIF DOMAIN-CONTAINING PROTEIN 1"/>
    <property type="match status" value="1"/>
</dbReference>
<dbReference type="PANTHER" id="PTHR31849">
    <property type="entry name" value="CYSTEINE-RICH PDF MOTIF DOMAIN-CONTAINING PROTEIN 1"/>
    <property type="match status" value="1"/>
</dbReference>
<dbReference type="Pfam" id="PF10170">
    <property type="entry name" value="C6_DPF"/>
    <property type="match status" value="1"/>
</dbReference>
<dbReference type="PRINTS" id="PR01995">
    <property type="entry name" value="UPF0595"/>
</dbReference>
<protein>
    <recommendedName>
        <fullName>Cysteine-rich DPF motif domain-containing protein 1</fullName>
    </recommendedName>
</protein>
<comment type="similarity">
    <text evidence="1">Belongs to the CDPF1 family.</text>
</comment>
<accession>A1L2W7</accession>
<organism>
    <name type="scientific">Xenopus laevis</name>
    <name type="common">African clawed frog</name>
    <dbReference type="NCBI Taxonomy" id="8355"/>
    <lineage>
        <taxon>Eukaryota</taxon>
        <taxon>Metazoa</taxon>
        <taxon>Chordata</taxon>
        <taxon>Craniata</taxon>
        <taxon>Vertebrata</taxon>
        <taxon>Euteleostomi</taxon>
        <taxon>Amphibia</taxon>
        <taxon>Batrachia</taxon>
        <taxon>Anura</taxon>
        <taxon>Pipoidea</taxon>
        <taxon>Pipidae</taxon>
        <taxon>Xenopodinae</taxon>
        <taxon>Xenopus</taxon>
        <taxon>Xenopus</taxon>
    </lineage>
</organism>
<sequence>MDLEESRPKGVFECELCRLSVPYTYFGQRPPNSHSVVLLEQCFITKDPFTPDKEKFLILGSPCSLCEKAVCVGTECSLFYSKRFCLPCVLQHRDDFPPEIQQEVDKRKAQKKS</sequence>
<feature type="chain" id="PRO_0000341364" description="Cysteine-rich DPF motif domain-containing protein 1">
    <location>
        <begin position="1"/>
        <end position="113"/>
    </location>
</feature>
<keyword id="KW-1185">Reference proteome</keyword>
<gene>
    <name type="primary">cdpf1</name>
</gene>
<reference key="1">
    <citation type="submission" date="2006-12" db="EMBL/GenBank/DDBJ databases">
        <authorList>
            <consortium name="NIH - Xenopus Gene Collection (XGC) project"/>
        </authorList>
    </citation>
    <scope>NUCLEOTIDE SEQUENCE [LARGE SCALE MRNA]</scope>
    <source>
        <tissue>Skin</tissue>
    </source>
</reference>
<proteinExistence type="inferred from homology"/>
<evidence type="ECO:0000305" key="1"/>